<feature type="chain" id="PRO_0000364572" description="Fructose-1,6-bisphosphatase class 1">
    <location>
        <begin position="1"/>
        <end position="290"/>
    </location>
</feature>
<feature type="binding site" evidence="1">
    <location>
        <position position="78"/>
    </location>
    <ligand>
        <name>Mg(2+)</name>
        <dbReference type="ChEBI" id="CHEBI:18420"/>
        <label>1</label>
    </ligand>
</feature>
<feature type="binding site" evidence="1">
    <location>
        <position position="96"/>
    </location>
    <ligand>
        <name>Mg(2+)</name>
        <dbReference type="ChEBI" id="CHEBI:18420"/>
        <label>1</label>
    </ligand>
</feature>
<feature type="binding site" evidence="1">
    <location>
        <position position="96"/>
    </location>
    <ligand>
        <name>Mg(2+)</name>
        <dbReference type="ChEBI" id="CHEBI:18420"/>
        <label>2</label>
    </ligand>
</feature>
<feature type="binding site" evidence="1">
    <location>
        <position position="98"/>
    </location>
    <ligand>
        <name>Mg(2+)</name>
        <dbReference type="ChEBI" id="CHEBI:18420"/>
        <label>1</label>
    </ligand>
</feature>
<feature type="binding site" evidence="1">
    <location>
        <begin position="99"/>
        <end position="102"/>
    </location>
    <ligand>
        <name>substrate</name>
    </ligand>
</feature>
<feature type="binding site" evidence="1">
    <location>
        <position position="99"/>
    </location>
    <ligand>
        <name>Mg(2+)</name>
        <dbReference type="ChEBI" id="CHEBI:18420"/>
        <label>2</label>
    </ligand>
</feature>
<feature type="binding site" evidence="1">
    <location>
        <position position="201"/>
    </location>
    <ligand>
        <name>substrate</name>
    </ligand>
</feature>
<feature type="binding site" evidence="1">
    <location>
        <position position="226"/>
    </location>
    <ligand>
        <name>substrate</name>
    </ligand>
</feature>
<feature type="binding site" evidence="1">
    <location>
        <position position="232"/>
    </location>
    <ligand>
        <name>Mg(2+)</name>
        <dbReference type="ChEBI" id="CHEBI:18420"/>
        <label>2</label>
    </ligand>
</feature>
<proteinExistence type="inferred from homology"/>
<accession>Q17V54</accession>
<dbReference type="EC" id="3.1.3.11" evidence="1"/>
<dbReference type="EMBL" id="AM260522">
    <property type="protein sequence ID" value="CAK00472.1"/>
    <property type="molecule type" value="Genomic_DNA"/>
</dbReference>
<dbReference type="RefSeq" id="WP_011578554.1">
    <property type="nucleotide sequence ID" value="NC_008229.1"/>
</dbReference>
<dbReference type="SMR" id="Q17V54"/>
<dbReference type="STRING" id="382638.Hac_1780"/>
<dbReference type="GeneID" id="31759005"/>
<dbReference type="KEGG" id="hac:Hac_1780"/>
<dbReference type="eggNOG" id="COG0158">
    <property type="taxonomic scope" value="Bacteria"/>
</dbReference>
<dbReference type="HOGENOM" id="CLU_039977_0_0_7"/>
<dbReference type="OrthoDB" id="9806756at2"/>
<dbReference type="BioCyc" id="HACI382638:HAC_RS07545-MONOMER"/>
<dbReference type="UniPathway" id="UPA00138"/>
<dbReference type="Proteomes" id="UP000000775">
    <property type="component" value="Chromosome"/>
</dbReference>
<dbReference type="GO" id="GO:0005829">
    <property type="term" value="C:cytosol"/>
    <property type="evidence" value="ECO:0007669"/>
    <property type="project" value="TreeGrafter"/>
</dbReference>
<dbReference type="GO" id="GO:0042132">
    <property type="term" value="F:fructose 1,6-bisphosphate 1-phosphatase activity"/>
    <property type="evidence" value="ECO:0007669"/>
    <property type="project" value="UniProtKB-UniRule"/>
</dbReference>
<dbReference type="GO" id="GO:0000287">
    <property type="term" value="F:magnesium ion binding"/>
    <property type="evidence" value="ECO:0007669"/>
    <property type="project" value="UniProtKB-UniRule"/>
</dbReference>
<dbReference type="GO" id="GO:0030388">
    <property type="term" value="P:fructose 1,6-bisphosphate metabolic process"/>
    <property type="evidence" value="ECO:0007669"/>
    <property type="project" value="TreeGrafter"/>
</dbReference>
<dbReference type="GO" id="GO:0006002">
    <property type="term" value="P:fructose 6-phosphate metabolic process"/>
    <property type="evidence" value="ECO:0007669"/>
    <property type="project" value="TreeGrafter"/>
</dbReference>
<dbReference type="GO" id="GO:0006000">
    <property type="term" value="P:fructose metabolic process"/>
    <property type="evidence" value="ECO:0007669"/>
    <property type="project" value="TreeGrafter"/>
</dbReference>
<dbReference type="GO" id="GO:0006094">
    <property type="term" value="P:gluconeogenesis"/>
    <property type="evidence" value="ECO:0007669"/>
    <property type="project" value="UniProtKB-UniRule"/>
</dbReference>
<dbReference type="GO" id="GO:0005986">
    <property type="term" value="P:sucrose biosynthetic process"/>
    <property type="evidence" value="ECO:0007669"/>
    <property type="project" value="TreeGrafter"/>
</dbReference>
<dbReference type="Gene3D" id="3.40.190.80">
    <property type="match status" value="1"/>
</dbReference>
<dbReference type="Gene3D" id="3.30.540.10">
    <property type="entry name" value="Fructose-1,6-Bisphosphatase, subunit A, domain 1"/>
    <property type="match status" value="1"/>
</dbReference>
<dbReference type="HAMAP" id="MF_01855">
    <property type="entry name" value="FBPase_class1"/>
    <property type="match status" value="1"/>
</dbReference>
<dbReference type="InterPro" id="IPR044015">
    <property type="entry name" value="FBPase_C_dom"/>
</dbReference>
<dbReference type="InterPro" id="IPR000146">
    <property type="entry name" value="FBPase_class-1"/>
</dbReference>
<dbReference type="InterPro" id="IPR033391">
    <property type="entry name" value="FBPase_N"/>
</dbReference>
<dbReference type="InterPro" id="IPR023079">
    <property type="entry name" value="SBPase"/>
</dbReference>
<dbReference type="NCBIfam" id="NF006781">
    <property type="entry name" value="PRK09293.2-1"/>
    <property type="match status" value="1"/>
</dbReference>
<dbReference type="PANTHER" id="PTHR11556">
    <property type="entry name" value="FRUCTOSE-1,6-BISPHOSPHATASE-RELATED"/>
    <property type="match status" value="1"/>
</dbReference>
<dbReference type="PANTHER" id="PTHR11556:SF35">
    <property type="entry name" value="SEDOHEPTULOSE-1,7-BISPHOSPHATASE, CHLOROPLASTIC"/>
    <property type="match status" value="1"/>
</dbReference>
<dbReference type="Pfam" id="PF00316">
    <property type="entry name" value="FBPase"/>
    <property type="match status" value="1"/>
</dbReference>
<dbReference type="Pfam" id="PF18913">
    <property type="entry name" value="FBPase_C"/>
    <property type="match status" value="1"/>
</dbReference>
<dbReference type="PIRSF" id="PIRSF000904">
    <property type="entry name" value="FBPtase_SBPase"/>
    <property type="match status" value="1"/>
</dbReference>
<dbReference type="PRINTS" id="PR01958">
    <property type="entry name" value="S17BPHPHTASE"/>
</dbReference>
<dbReference type="SUPFAM" id="SSF56655">
    <property type="entry name" value="Carbohydrate phosphatase"/>
    <property type="match status" value="1"/>
</dbReference>
<name>F16PA_HELAH</name>
<sequence length="290" mass="32879">MDYKHFKGVHANIVIEVISLLEKGVKKAQEILEKPDAGSYTKLENSSGDTPIKADLALDKFLEENFLSLENVKSVFSEEKEKPVTKENGSYLIAYDPLDGSSVMEANFLVGTIIGIYEKDYKAHNLAASLYVVFGHKIELVVALDQVYRYAFYQNKFHFIETIALENKGKIVASGGNQKDFSMGLKKALEGFFTENYRLRYSGSMVADVHHVLIKKGGVFSYPQKKLRKLFEVFPLALIIEKAKGEAFYFDKGVKKRLLDQGVESYHEKSECYLTSQHEAQILEKYLKGE</sequence>
<protein>
    <recommendedName>
        <fullName evidence="1">Fructose-1,6-bisphosphatase class 1</fullName>
        <shortName evidence="1">FBPase class 1</shortName>
        <ecNumber evidence="1">3.1.3.11</ecNumber>
    </recommendedName>
    <alternativeName>
        <fullName evidence="1">D-fructose-1,6-bisphosphate 1-phosphohydrolase class 1</fullName>
    </alternativeName>
</protein>
<reference key="1">
    <citation type="journal article" date="2006" name="PLoS Genet.">
        <title>Who ate whom? Adaptive Helicobacter genomic changes that accompanied a host jump from early humans to large felines.</title>
        <authorList>
            <person name="Eppinger M."/>
            <person name="Baar C."/>
            <person name="Linz B."/>
            <person name="Raddatz G."/>
            <person name="Lanz C."/>
            <person name="Keller H."/>
            <person name="Morelli G."/>
            <person name="Gressmann H."/>
            <person name="Achtman M."/>
            <person name="Schuster S.C."/>
        </authorList>
    </citation>
    <scope>NUCLEOTIDE SEQUENCE [LARGE SCALE GENOMIC DNA]</scope>
    <source>
        <strain>Sheeba</strain>
    </source>
</reference>
<organism>
    <name type="scientific">Helicobacter acinonychis (strain Sheeba)</name>
    <dbReference type="NCBI Taxonomy" id="382638"/>
    <lineage>
        <taxon>Bacteria</taxon>
        <taxon>Pseudomonadati</taxon>
        <taxon>Campylobacterota</taxon>
        <taxon>Epsilonproteobacteria</taxon>
        <taxon>Campylobacterales</taxon>
        <taxon>Helicobacteraceae</taxon>
        <taxon>Helicobacter</taxon>
    </lineage>
</organism>
<evidence type="ECO:0000255" key="1">
    <source>
        <dbReference type="HAMAP-Rule" id="MF_01855"/>
    </source>
</evidence>
<comment type="catalytic activity">
    <reaction evidence="1">
        <text>beta-D-fructose 1,6-bisphosphate + H2O = beta-D-fructose 6-phosphate + phosphate</text>
        <dbReference type="Rhea" id="RHEA:11064"/>
        <dbReference type="ChEBI" id="CHEBI:15377"/>
        <dbReference type="ChEBI" id="CHEBI:32966"/>
        <dbReference type="ChEBI" id="CHEBI:43474"/>
        <dbReference type="ChEBI" id="CHEBI:57634"/>
        <dbReference type="EC" id="3.1.3.11"/>
    </reaction>
</comment>
<comment type="cofactor">
    <cofactor evidence="1">
        <name>Mg(2+)</name>
        <dbReference type="ChEBI" id="CHEBI:18420"/>
    </cofactor>
    <text evidence="1">Binds 2 magnesium ions per subunit.</text>
</comment>
<comment type="pathway">
    <text evidence="1">Carbohydrate biosynthesis; gluconeogenesis.</text>
</comment>
<comment type="subunit">
    <text evidence="1">Homotetramer.</text>
</comment>
<comment type="subcellular location">
    <subcellularLocation>
        <location evidence="1">Cytoplasm</location>
    </subcellularLocation>
</comment>
<comment type="similarity">
    <text evidence="1">Belongs to the FBPase class 1 family.</text>
</comment>
<keyword id="KW-0119">Carbohydrate metabolism</keyword>
<keyword id="KW-0963">Cytoplasm</keyword>
<keyword id="KW-0378">Hydrolase</keyword>
<keyword id="KW-0460">Magnesium</keyword>
<keyword id="KW-0479">Metal-binding</keyword>
<gene>
    <name evidence="1" type="primary">fbp</name>
    <name type="ordered locus">Hac_1780</name>
</gene>